<reference key="1">
    <citation type="submission" date="2008-06" db="EMBL/GenBank/DDBJ databases">
        <title>Complete sequence of Pelodictyon phaeoclathratiforme BU-1.</title>
        <authorList>
            <consortium name="US DOE Joint Genome Institute"/>
            <person name="Lucas S."/>
            <person name="Copeland A."/>
            <person name="Lapidus A."/>
            <person name="Glavina del Rio T."/>
            <person name="Dalin E."/>
            <person name="Tice H."/>
            <person name="Bruce D."/>
            <person name="Goodwin L."/>
            <person name="Pitluck S."/>
            <person name="Schmutz J."/>
            <person name="Larimer F."/>
            <person name="Land M."/>
            <person name="Hauser L."/>
            <person name="Kyrpides N."/>
            <person name="Mikhailova N."/>
            <person name="Liu Z."/>
            <person name="Li T."/>
            <person name="Zhao F."/>
            <person name="Overmann J."/>
            <person name="Bryant D.A."/>
            <person name="Richardson P."/>
        </authorList>
    </citation>
    <scope>NUCLEOTIDE SEQUENCE [LARGE SCALE GENOMIC DNA]</scope>
    <source>
        <strain>DSM 5477 / BU-1</strain>
    </source>
</reference>
<organism>
    <name type="scientific">Pelodictyon phaeoclathratiforme (strain DSM 5477 / BU-1)</name>
    <dbReference type="NCBI Taxonomy" id="324925"/>
    <lineage>
        <taxon>Bacteria</taxon>
        <taxon>Pseudomonadati</taxon>
        <taxon>Chlorobiota</taxon>
        <taxon>Chlorobiia</taxon>
        <taxon>Chlorobiales</taxon>
        <taxon>Chlorobiaceae</taxon>
        <taxon>Chlorobium/Pelodictyon group</taxon>
        <taxon>Pelodictyon</taxon>
    </lineage>
</organism>
<proteinExistence type="inferred from homology"/>
<name>SUCC_PELPB</name>
<comment type="function">
    <text evidence="1">Succinyl-CoA synthetase functions in the citric acid cycle (TCA), coupling the hydrolysis of succinyl-CoA to the synthesis of either ATP or GTP and thus represents the only step of substrate-level phosphorylation in the TCA. The beta subunit provides nucleotide specificity of the enzyme and binds the substrate succinate, while the binding sites for coenzyme A and phosphate are found in the alpha subunit.</text>
</comment>
<comment type="catalytic activity">
    <reaction evidence="1">
        <text>succinate + ATP + CoA = succinyl-CoA + ADP + phosphate</text>
        <dbReference type="Rhea" id="RHEA:17661"/>
        <dbReference type="ChEBI" id="CHEBI:30031"/>
        <dbReference type="ChEBI" id="CHEBI:30616"/>
        <dbReference type="ChEBI" id="CHEBI:43474"/>
        <dbReference type="ChEBI" id="CHEBI:57287"/>
        <dbReference type="ChEBI" id="CHEBI:57292"/>
        <dbReference type="ChEBI" id="CHEBI:456216"/>
        <dbReference type="EC" id="6.2.1.5"/>
    </reaction>
    <physiologicalReaction direction="right-to-left" evidence="1">
        <dbReference type="Rhea" id="RHEA:17663"/>
    </physiologicalReaction>
</comment>
<comment type="catalytic activity">
    <reaction evidence="1">
        <text>GTP + succinate + CoA = succinyl-CoA + GDP + phosphate</text>
        <dbReference type="Rhea" id="RHEA:22120"/>
        <dbReference type="ChEBI" id="CHEBI:30031"/>
        <dbReference type="ChEBI" id="CHEBI:37565"/>
        <dbReference type="ChEBI" id="CHEBI:43474"/>
        <dbReference type="ChEBI" id="CHEBI:57287"/>
        <dbReference type="ChEBI" id="CHEBI:57292"/>
        <dbReference type="ChEBI" id="CHEBI:58189"/>
    </reaction>
    <physiologicalReaction direction="right-to-left" evidence="1">
        <dbReference type="Rhea" id="RHEA:22122"/>
    </physiologicalReaction>
</comment>
<comment type="cofactor">
    <cofactor evidence="1">
        <name>Mg(2+)</name>
        <dbReference type="ChEBI" id="CHEBI:18420"/>
    </cofactor>
    <text evidence="1">Binds 1 Mg(2+) ion per subunit.</text>
</comment>
<comment type="pathway">
    <text evidence="1">Carbohydrate metabolism; tricarboxylic acid cycle; succinate from succinyl-CoA (ligase route): step 1/1.</text>
</comment>
<comment type="subunit">
    <text evidence="1">Heterotetramer of two alpha and two beta subunits.</text>
</comment>
<comment type="similarity">
    <text evidence="1">Belongs to the succinate/malate CoA ligase beta subunit family.</text>
</comment>
<protein>
    <recommendedName>
        <fullName evidence="1">Succinate--CoA ligase [ADP-forming] subunit beta</fullName>
        <ecNumber evidence="1">6.2.1.5</ecNumber>
    </recommendedName>
    <alternativeName>
        <fullName evidence="1">Succinyl-CoA synthetase subunit beta</fullName>
        <shortName evidence="1">SCS-beta</shortName>
    </alternativeName>
</protein>
<keyword id="KW-0067">ATP-binding</keyword>
<keyword id="KW-0436">Ligase</keyword>
<keyword id="KW-0460">Magnesium</keyword>
<keyword id="KW-0479">Metal-binding</keyword>
<keyword id="KW-0547">Nucleotide-binding</keyword>
<keyword id="KW-1185">Reference proteome</keyword>
<keyword id="KW-0816">Tricarboxylic acid cycle</keyword>
<sequence length="392" mass="42410">MNIHEYQGKDILRKFGVAVPRGIVAYSPEEAKQAAEQLFDELGCPVVVIKAQIHAGGRGKAGGVKLAKSPEESLDIAHQLIGMTLITHQTGPEGKEVRRVLVEEGMNIEKEFYVGITLDRSTSKNVLMVSTEGGMEIEKVAEETPERLLKIQIDPLFGMQGFQAREAAFFLGLKGEQFRNAVNFITALYNAYISIDAALAEINPLVVTKEGKVLALDAKINFDDNALFRHKEFHELRDTNEEDPFEVEASKSNLNYVRLDGNVGCMVNGAGLAMGTMDMIQLAGGKPANFLDVGGSASPQTVEEGFKIILSDKNVKAILVNIFGGIVRCDRVAGGIIEAAKKIDLHLPVIVRLEGTNAPIAQKMLDDSGLNLIAAKGLRDAAQKVQEALAAS</sequence>
<dbReference type="EC" id="6.2.1.5" evidence="1"/>
<dbReference type="EMBL" id="CP001110">
    <property type="protein sequence ID" value="ACF43068.1"/>
    <property type="molecule type" value="Genomic_DNA"/>
</dbReference>
<dbReference type="RefSeq" id="WP_012507563.1">
    <property type="nucleotide sequence ID" value="NC_011060.1"/>
</dbReference>
<dbReference type="SMR" id="B4SEH6"/>
<dbReference type="STRING" id="324925.Ppha_0776"/>
<dbReference type="KEGG" id="pph:Ppha_0776"/>
<dbReference type="eggNOG" id="COG0045">
    <property type="taxonomic scope" value="Bacteria"/>
</dbReference>
<dbReference type="HOGENOM" id="CLU_037430_0_2_10"/>
<dbReference type="OrthoDB" id="9802602at2"/>
<dbReference type="UniPathway" id="UPA00223">
    <property type="reaction ID" value="UER00999"/>
</dbReference>
<dbReference type="Proteomes" id="UP000002724">
    <property type="component" value="Chromosome"/>
</dbReference>
<dbReference type="GO" id="GO:0005829">
    <property type="term" value="C:cytosol"/>
    <property type="evidence" value="ECO:0007669"/>
    <property type="project" value="TreeGrafter"/>
</dbReference>
<dbReference type="GO" id="GO:0042709">
    <property type="term" value="C:succinate-CoA ligase complex"/>
    <property type="evidence" value="ECO:0007669"/>
    <property type="project" value="TreeGrafter"/>
</dbReference>
<dbReference type="GO" id="GO:0005524">
    <property type="term" value="F:ATP binding"/>
    <property type="evidence" value="ECO:0007669"/>
    <property type="project" value="UniProtKB-UniRule"/>
</dbReference>
<dbReference type="GO" id="GO:0000287">
    <property type="term" value="F:magnesium ion binding"/>
    <property type="evidence" value="ECO:0007669"/>
    <property type="project" value="UniProtKB-UniRule"/>
</dbReference>
<dbReference type="GO" id="GO:0004775">
    <property type="term" value="F:succinate-CoA ligase (ADP-forming) activity"/>
    <property type="evidence" value="ECO:0007669"/>
    <property type="project" value="UniProtKB-UniRule"/>
</dbReference>
<dbReference type="GO" id="GO:0004776">
    <property type="term" value="F:succinate-CoA ligase (GDP-forming) activity"/>
    <property type="evidence" value="ECO:0007669"/>
    <property type="project" value="RHEA"/>
</dbReference>
<dbReference type="GO" id="GO:0006104">
    <property type="term" value="P:succinyl-CoA metabolic process"/>
    <property type="evidence" value="ECO:0007669"/>
    <property type="project" value="TreeGrafter"/>
</dbReference>
<dbReference type="GO" id="GO:0006099">
    <property type="term" value="P:tricarboxylic acid cycle"/>
    <property type="evidence" value="ECO:0007669"/>
    <property type="project" value="UniProtKB-UniRule"/>
</dbReference>
<dbReference type="FunFam" id="3.30.1490.20:FF:000002">
    <property type="entry name" value="Succinate--CoA ligase [ADP-forming] subunit beta"/>
    <property type="match status" value="1"/>
</dbReference>
<dbReference type="FunFam" id="3.30.470.20:FF:000002">
    <property type="entry name" value="Succinate--CoA ligase [ADP-forming] subunit beta"/>
    <property type="match status" value="1"/>
</dbReference>
<dbReference type="FunFam" id="3.40.50.261:FF:000001">
    <property type="entry name" value="Succinate--CoA ligase [ADP-forming] subunit beta"/>
    <property type="match status" value="1"/>
</dbReference>
<dbReference type="Gene3D" id="3.30.1490.20">
    <property type="entry name" value="ATP-grasp fold, A domain"/>
    <property type="match status" value="1"/>
</dbReference>
<dbReference type="Gene3D" id="3.30.470.20">
    <property type="entry name" value="ATP-grasp fold, B domain"/>
    <property type="match status" value="1"/>
</dbReference>
<dbReference type="Gene3D" id="3.40.50.261">
    <property type="entry name" value="Succinyl-CoA synthetase domains"/>
    <property type="match status" value="1"/>
</dbReference>
<dbReference type="HAMAP" id="MF_00558">
    <property type="entry name" value="Succ_CoA_beta"/>
    <property type="match status" value="1"/>
</dbReference>
<dbReference type="InterPro" id="IPR011761">
    <property type="entry name" value="ATP-grasp"/>
</dbReference>
<dbReference type="InterPro" id="IPR013650">
    <property type="entry name" value="ATP-grasp_succ-CoA_synth-type"/>
</dbReference>
<dbReference type="InterPro" id="IPR013815">
    <property type="entry name" value="ATP_grasp_subdomain_1"/>
</dbReference>
<dbReference type="InterPro" id="IPR017866">
    <property type="entry name" value="Succ-CoA_synthase_bsu_CS"/>
</dbReference>
<dbReference type="InterPro" id="IPR005811">
    <property type="entry name" value="SUCC_ACL_C"/>
</dbReference>
<dbReference type="InterPro" id="IPR005809">
    <property type="entry name" value="Succ_CoA_ligase-like_bsu"/>
</dbReference>
<dbReference type="InterPro" id="IPR016102">
    <property type="entry name" value="Succinyl-CoA_synth-like"/>
</dbReference>
<dbReference type="NCBIfam" id="NF001913">
    <property type="entry name" value="PRK00696.1"/>
    <property type="match status" value="1"/>
</dbReference>
<dbReference type="NCBIfam" id="TIGR01016">
    <property type="entry name" value="sucCoAbeta"/>
    <property type="match status" value="1"/>
</dbReference>
<dbReference type="PANTHER" id="PTHR11815:SF10">
    <property type="entry name" value="SUCCINATE--COA LIGASE [GDP-FORMING] SUBUNIT BETA, MITOCHONDRIAL"/>
    <property type="match status" value="1"/>
</dbReference>
<dbReference type="PANTHER" id="PTHR11815">
    <property type="entry name" value="SUCCINYL-COA SYNTHETASE BETA CHAIN"/>
    <property type="match status" value="1"/>
</dbReference>
<dbReference type="Pfam" id="PF08442">
    <property type="entry name" value="ATP-grasp_2"/>
    <property type="match status" value="1"/>
</dbReference>
<dbReference type="Pfam" id="PF00549">
    <property type="entry name" value="Ligase_CoA"/>
    <property type="match status" value="1"/>
</dbReference>
<dbReference type="PIRSF" id="PIRSF001554">
    <property type="entry name" value="SucCS_beta"/>
    <property type="match status" value="1"/>
</dbReference>
<dbReference type="SUPFAM" id="SSF56059">
    <property type="entry name" value="Glutathione synthetase ATP-binding domain-like"/>
    <property type="match status" value="1"/>
</dbReference>
<dbReference type="SUPFAM" id="SSF52210">
    <property type="entry name" value="Succinyl-CoA synthetase domains"/>
    <property type="match status" value="1"/>
</dbReference>
<dbReference type="PROSITE" id="PS50975">
    <property type="entry name" value="ATP_GRASP"/>
    <property type="match status" value="1"/>
</dbReference>
<dbReference type="PROSITE" id="PS01217">
    <property type="entry name" value="SUCCINYL_COA_LIG_3"/>
    <property type="match status" value="1"/>
</dbReference>
<accession>B4SEH6</accession>
<evidence type="ECO:0000255" key="1">
    <source>
        <dbReference type="HAMAP-Rule" id="MF_00558"/>
    </source>
</evidence>
<feature type="chain" id="PRO_1000129206" description="Succinate--CoA ligase [ADP-forming] subunit beta">
    <location>
        <begin position="1"/>
        <end position="392"/>
    </location>
</feature>
<feature type="domain" description="ATP-grasp" evidence="1">
    <location>
        <begin position="9"/>
        <end position="248"/>
    </location>
</feature>
<feature type="binding site" evidence="1">
    <location>
        <position position="50"/>
    </location>
    <ligand>
        <name>ATP</name>
        <dbReference type="ChEBI" id="CHEBI:30616"/>
    </ligand>
</feature>
<feature type="binding site" evidence="1">
    <location>
        <begin position="57"/>
        <end position="59"/>
    </location>
    <ligand>
        <name>ATP</name>
        <dbReference type="ChEBI" id="CHEBI:30616"/>
    </ligand>
</feature>
<feature type="binding site" evidence="1">
    <location>
        <position position="103"/>
    </location>
    <ligand>
        <name>ATP</name>
        <dbReference type="ChEBI" id="CHEBI:30616"/>
    </ligand>
</feature>
<feature type="binding site" evidence="1">
    <location>
        <position position="106"/>
    </location>
    <ligand>
        <name>ATP</name>
        <dbReference type="ChEBI" id="CHEBI:30616"/>
    </ligand>
</feature>
<feature type="binding site" evidence="1">
    <location>
        <position position="111"/>
    </location>
    <ligand>
        <name>ATP</name>
        <dbReference type="ChEBI" id="CHEBI:30616"/>
    </ligand>
</feature>
<feature type="binding site" evidence="1">
    <location>
        <position position="203"/>
    </location>
    <ligand>
        <name>Mg(2+)</name>
        <dbReference type="ChEBI" id="CHEBI:18420"/>
    </ligand>
</feature>
<feature type="binding site" evidence="1">
    <location>
        <position position="217"/>
    </location>
    <ligand>
        <name>Mg(2+)</name>
        <dbReference type="ChEBI" id="CHEBI:18420"/>
    </ligand>
</feature>
<feature type="binding site" evidence="1">
    <location>
        <position position="268"/>
    </location>
    <ligand>
        <name>substrate</name>
        <note>ligand shared with subunit alpha</note>
    </ligand>
</feature>
<feature type="binding site" evidence="1">
    <location>
        <begin position="325"/>
        <end position="327"/>
    </location>
    <ligand>
        <name>substrate</name>
        <note>ligand shared with subunit alpha</note>
    </ligand>
</feature>
<gene>
    <name evidence="1" type="primary">sucC</name>
    <name type="ordered locus">Ppha_0776</name>
</gene>